<organism>
    <name type="scientific">Homo sapiens</name>
    <name type="common">Human</name>
    <dbReference type="NCBI Taxonomy" id="9606"/>
    <lineage>
        <taxon>Eukaryota</taxon>
        <taxon>Metazoa</taxon>
        <taxon>Chordata</taxon>
        <taxon>Craniata</taxon>
        <taxon>Vertebrata</taxon>
        <taxon>Euteleostomi</taxon>
        <taxon>Mammalia</taxon>
        <taxon>Eutheria</taxon>
        <taxon>Euarchontoglires</taxon>
        <taxon>Primates</taxon>
        <taxon>Haplorrhini</taxon>
        <taxon>Catarrhini</taxon>
        <taxon>Hominidae</taxon>
        <taxon>Homo</taxon>
    </lineage>
</organism>
<feature type="chain" id="PRO_0000064401" description="Probable splicing factor YJU2B">
    <location>
        <begin position="1"/>
        <end position="396"/>
    </location>
</feature>
<feature type="region of interest" description="Disordered" evidence="3">
    <location>
        <begin position="1"/>
        <end position="26"/>
    </location>
</feature>
<feature type="region of interest" description="Disordered" evidence="3">
    <location>
        <begin position="295"/>
        <end position="396"/>
    </location>
</feature>
<feature type="coiled-coil region" evidence="2">
    <location>
        <begin position="182"/>
        <end position="214"/>
    </location>
</feature>
<feature type="compositionally biased region" description="Basic and acidic residues" evidence="3">
    <location>
        <begin position="315"/>
        <end position="327"/>
    </location>
</feature>
<feature type="compositionally biased region" description="Polar residues" evidence="3">
    <location>
        <begin position="340"/>
        <end position="350"/>
    </location>
</feature>
<feature type="modified residue" description="Phosphoserine" evidence="8">
    <location>
        <position position="40"/>
    </location>
</feature>
<feature type="modified residue" description="Phosphoserine" evidence="7 8">
    <location>
        <position position="306"/>
    </location>
</feature>
<feature type="modified residue" description="Phosphoserine" evidence="8">
    <location>
        <position position="362"/>
    </location>
</feature>
<feature type="sequence variant" id="VAR_053854" description="In dbSNP:rs12974461.">
    <original>S</original>
    <variation>C</variation>
    <location>
        <position position="22"/>
    </location>
</feature>
<feature type="sequence variant" id="VAR_053855" description="In dbSNP:rs35761244.">
    <original>C</original>
    <variation>S</variation>
    <location>
        <position position="336"/>
    </location>
</feature>
<accession>P13994</accession>
<accession>Q9BQ72</accession>
<proteinExistence type="evidence at protein level"/>
<name>YJU2B_HUMAN</name>
<protein>
    <recommendedName>
        <fullName evidence="5">Probable splicing factor YJU2B</fullName>
    </recommendedName>
    <alternativeName>
        <fullName evidence="6">Coiled-coil domain-containing protein 130</fullName>
    </alternativeName>
</protein>
<reference key="1">
    <citation type="submission" date="2000-03" db="EMBL/GenBank/DDBJ databases">
        <authorList>
            <person name="Wan T."/>
            <person name="Li N."/>
            <person name="Zhang W."/>
            <person name="Cao X."/>
        </authorList>
    </citation>
    <scope>NUCLEOTIDE SEQUENCE [LARGE SCALE MRNA]</scope>
</reference>
<reference key="2">
    <citation type="journal article" date="2004" name="Genome Res.">
        <title>The status, quality, and expansion of the NIH full-length cDNA project: the Mammalian Gene Collection (MGC).</title>
        <authorList>
            <consortium name="The MGC Project Team"/>
        </authorList>
    </citation>
    <scope>NUCLEOTIDE SEQUENCE [LARGE SCALE MRNA]</scope>
    <source>
        <tissue>Lung</tissue>
    </source>
</reference>
<reference key="3">
    <citation type="journal article" date="1988" name="Eur. J. Biochem.">
        <title>Alternative mechanisms for gene activation induced by poly(rI).poly(rC) and Newcastle disease virus.</title>
        <authorList>
            <person name="Lammers R."/>
            <person name="Gross G."/>
            <person name="Mayr U."/>
            <person name="Collins J."/>
        </authorList>
    </citation>
    <scope>NUCLEOTIDE SEQUENCE [GENOMIC DNA] OF 192-396</scope>
    <scope>INDUCTION</scope>
    <source>
        <tissue>Fibroblast</tissue>
    </source>
</reference>
<reference key="4">
    <citation type="journal article" date="2011" name="Sci. Signal.">
        <title>System-wide temporal characterization of the proteome and phosphoproteome of human embryonic stem cell differentiation.</title>
        <authorList>
            <person name="Rigbolt K.T."/>
            <person name="Prokhorova T.A."/>
            <person name="Akimov V."/>
            <person name="Henningsen J."/>
            <person name="Johansen P.T."/>
            <person name="Kratchmarova I."/>
            <person name="Kassem M."/>
            <person name="Mann M."/>
            <person name="Olsen J.V."/>
            <person name="Blagoev B."/>
        </authorList>
    </citation>
    <scope>PHOSPHORYLATION [LARGE SCALE ANALYSIS] AT SER-306</scope>
    <scope>IDENTIFICATION BY MASS SPECTROMETRY [LARGE SCALE ANALYSIS]</scope>
</reference>
<reference key="5">
    <citation type="journal article" date="2013" name="J. Proteome Res.">
        <title>Toward a comprehensive characterization of a human cancer cell phosphoproteome.</title>
        <authorList>
            <person name="Zhou H."/>
            <person name="Di Palma S."/>
            <person name="Preisinger C."/>
            <person name="Peng M."/>
            <person name="Polat A.N."/>
            <person name="Heck A.J."/>
            <person name="Mohammed S."/>
        </authorList>
    </citation>
    <scope>PHOSPHORYLATION [LARGE SCALE ANALYSIS] AT SER-40; SER-306 AND SER-362</scope>
    <scope>IDENTIFICATION BY MASS SPECTROMETRY [LARGE SCALE ANALYSIS]</scope>
    <source>
        <tissue>Cervix carcinoma</tissue>
        <tissue>Erythroleukemia</tissue>
    </source>
</reference>
<sequence length="396" mass="44802">MGERKGVNKYYPPDFNPEKHGSLNRYHNSHPLRERARKLSQGILIIRFEMPYNIWCDGCKNHIGMGVRYNAEKKKVGNYYTTPIYRFRMKCHLCVNYIEMQTDPANCDYVIVSGAQRKEERWDMADNEQVLTTEHEKKQKLETDAMFRLEHGEADRSTLKKALPTLSHIQEAQSAWKDDFALNSMLRRRFREKKKAIQEEEERDQALQAKASLTIPLVPETEDDRKLAALLKFHTLDSYEDKQKLKRTEIISRSWFPSAPGSASSSKVSGVLKKLAQSRRTALATSPITVGDLGIVRRRSRDVPESPQHAADTPKSGEPRVPEEAAQDRPMSPGDCPPETTETPKCSSPRGQEGSRQDKPLSPAGSSQEAADTPDTRHPCSLGSSLVADYSDSESE</sequence>
<gene>
    <name evidence="6" type="primary">YJU2B</name>
    <name evidence="6" type="synonym">CCDC130</name>
    <name type="ORF">SB115</name>
</gene>
<evidence type="ECO:0000250" key="1">
    <source>
        <dbReference type="UniProtKB" id="Q9BW85"/>
    </source>
</evidence>
<evidence type="ECO:0000255" key="2"/>
<evidence type="ECO:0000256" key="3">
    <source>
        <dbReference type="SAM" id="MobiDB-lite"/>
    </source>
</evidence>
<evidence type="ECO:0000269" key="4">
    <source>
    </source>
</evidence>
<evidence type="ECO:0000305" key="5"/>
<evidence type="ECO:0000312" key="6">
    <source>
        <dbReference type="HGNC" id="HGNC:28118"/>
    </source>
</evidence>
<evidence type="ECO:0007744" key="7">
    <source>
    </source>
</evidence>
<evidence type="ECO:0007744" key="8">
    <source>
    </source>
</evidence>
<dbReference type="EMBL" id="AF250306">
    <property type="protein sequence ID" value="AAK37425.1"/>
    <property type="molecule type" value="mRNA"/>
</dbReference>
<dbReference type="EMBL" id="BC002905">
    <property type="protein sequence ID" value="AAH02905.1"/>
    <property type="molecule type" value="mRNA"/>
</dbReference>
<dbReference type="EMBL" id="X13956">
    <property type="protein sequence ID" value="CAA32138.1"/>
    <property type="status" value="ALT_SEQ"/>
    <property type="molecule type" value="Genomic_DNA"/>
</dbReference>
<dbReference type="CCDS" id="CCDS12296.1"/>
<dbReference type="PIR" id="S02660">
    <property type="entry name" value="S02660"/>
</dbReference>
<dbReference type="RefSeq" id="NP_001307490.1">
    <property type="nucleotide sequence ID" value="NM_001320561.2"/>
</dbReference>
<dbReference type="RefSeq" id="NP_001307493.1">
    <property type="nucleotide sequence ID" value="NM_001320564.2"/>
</dbReference>
<dbReference type="RefSeq" id="NP_001307494.1">
    <property type="nucleotide sequence ID" value="NM_001320565.2"/>
</dbReference>
<dbReference type="RefSeq" id="NP_001307495.1">
    <property type="nucleotide sequence ID" value="NM_001320566.1"/>
</dbReference>
<dbReference type="RefSeq" id="NP_001307496.1">
    <property type="nucleotide sequence ID" value="NM_001320567.1"/>
</dbReference>
<dbReference type="RefSeq" id="NP_001307497.1">
    <property type="nucleotide sequence ID" value="NM_001320568.1"/>
</dbReference>
<dbReference type="RefSeq" id="NP_001307498.1">
    <property type="nucleotide sequence ID" value="NM_001320569.1"/>
</dbReference>
<dbReference type="RefSeq" id="NP_110445.1">
    <property type="nucleotide sequence ID" value="NM_030818.4"/>
</dbReference>
<dbReference type="RefSeq" id="XP_005260143.1">
    <property type="nucleotide sequence ID" value="XM_005260086.5"/>
</dbReference>
<dbReference type="RefSeq" id="XP_054178221.1">
    <property type="nucleotide sequence ID" value="XM_054322246.1"/>
</dbReference>
<dbReference type="SMR" id="P13994"/>
<dbReference type="BioGRID" id="123536">
    <property type="interactions" value="70"/>
</dbReference>
<dbReference type="FunCoup" id="P13994">
    <property type="interactions" value="1056"/>
</dbReference>
<dbReference type="IntAct" id="P13994">
    <property type="interactions" value="57"/>
</dbReference>
<dbReference type="MINT" id="P13994"/>
<dbReference type="STRING" id="9606.ENSP00000465776"/>
<dbReference type="GlyGen" id="P13994">
    <property type="glycosylation" value="1 site"/>
</dbReference>
<dbReference type="iPTMnet" id="P13994"/>
<dbReference type="PhosphoSitePlus" id="P13994"/>
<dbReference type="BioMuta" id="CCDC130"/>
<dbReference type="DMDM" id="134037158"/>
<dbReference type="jPOST" id="P13994"/>
<dbReference type="MassIVE" id="P13994"/>
<dbReference type="PaxDb" id="9606-ENSP00000465776"/>
<dbReference type="PeptideAtlas" id="P13994"/>
<dbReference type="ProteomicsDB" id="53015"/>
<dbReference type="Pumba" id="P13994"/>
<dbReference type="Antibodypedia" id="54013">
    <property type="antibodies" value="51 antibodies from 12 providers"/>
</dbReference>
<dbReference type="DNASU" id="81576"/>
<dbReference type="Ensembl" id="ENST00000221554.13">
    <property type="protein sequence ID" value="ENSP00000221554.7"/>
    <property type="gene ID" value="ENSG00000104957.14"/>
</dbReference>
<dbReference type="Ensembl" id="ENST00000586600.5">
    <property type="protein sequence ID" value="ENSP00000465776.1"/>
    <property type="gene ID" value="ENSG00000104957.14"/>
</dbReference>
<dbReference type="GeneID" id="81576"/>
<dbReference type="KEGG" id="hsa:81576"/>
<dbReference type="MANE-Select" id="ENST00000221554.13">
    <property type="protein sequence ID" value="ENSP00000221554.7"/>
    <property type="RefSeq nucleotide sequence ID" value="NM_030818.4"/>
    <property type="RefSeq protein sequence ID" value="NP_110445.1"/>
</dbReference>
<dbReference type="UCSC" id="uc002mxc.2">
    <property type="organism name" value="human"/>
</dbReference>
<dbReference type="AGR" id="HGNC:28118"/>
<dbReference type="CTD" id="81576"/>
<dbReference type="GeneCards" id="YJU2B"/>
<dbReference type="HGNC" id="HGNC:28118">
    <property type="gene designation" value="YJU2B"/>
</dbReference>
<dbReference type="HPA" id="ENSG00000104957">
    <property type="expression patterns" value="Low tissue specificity"/>
</dbReference>
<dbReference type="neXtProt" id="NX_P13994"/>
<dbReference type="OpenTargets" id="ENSG00000104957"/>
<dbReference type="VEuPathDB" id="HostDB:ENSG00000104957"/>
<dbReference type="eggNOG" id="KOG2990">
    <property type="taxonomic scope" value="Eukaryota"/>
</dbReference>
<dbReference type="GeneTree" id="ENSGT00530000063615"/>
<dbReference type="HOGENOM" id="CLU_050402_3_1_1"/>
<dbReference type="InParanoid" id="P13994"/>
<dbReference type="OMA" id="RNMSVWD"/>
<dbReference type="OrthoDB" id="360327at2759"/>
<dbReference type="PAN-GO" id="P13994">
    <property type="GO annotations" value="3 GO annotations based on evolutionary models"/>
</dbReference>
<dbReference type="PhylomeDB" id="P13994"/>
<dbReference type="PathwayCommons" id="P13994"/>
<dbReference type="SignaLink" id="P13994"/>
<dbReference type="BioGRID-ORCS" id="81576">
    <property type="hits" value="591 hits in 1165 CRISPR screens"/>
</dbReference>
<dbReference type="ChiTaRS" id="CCDC130">
    <property type="organism name" value="human"/>
</dbReference>
<dbReference type="GenomeRNAi" id="81576"/>
<dbReference type="Pharos" id="P13994">
    <property type="development level" value="Tdark"/>
</dbReference>
<dbReference type="PRO" id="PR:P13994"/>
<dbReference type="Proteomes" id="UP000005640">
    <property type="component" value="Chromosome 19"/>
</dbReference>
<dbReference type="RNAct" id="P13994">
    <property type="molecule type" value="protein"/>
</dbReference>
<dbReference type="Bgee" id="ENSG00000104957">
    <property type="expression patterns" value="Expressed in granulocyte and 181 other cell types or tissues"/>
</dbReference>
<dbReference type="ExpressionAtlas" id="P13994">
    <property type="expression patterns" value="baseline and differential"/>
</dbReference>
<dbReference type="GO" id="GO:0071014">
    <property type="term" value="C:post-mRNA release spliceosomal complex"/>
    <property type="evidence" value="ECO:0000318"/>
    <property type="project" value="GO_Central"/>
</dbReference>
<dbReference type="GO" id="GO:0005684">
    <property type="term" value="C:U2-type spliceosomal complex"/>
    <property type="evidence" value="ECO:0000318"/>
    <property type="project" value="GO_Central"/>
</dbReference>
<dbReference type="GO" id="GO:0000398">
    <property type="term" value="P:mRNA splicing, via spliceosome"/>
    <property type="evidence" value="ECO:0007669"/>
    <property type="project" value="InterPro"/>
</dbReference>
<dbReference type="GO" id="GO:0009615">
    <property type="term" value="P:response to virus"/>
    <property type="evidence" value="ECO:0000270"/>
    <property type="project" value="UniProtKB"/>
</dbReference>
<dbReference type="GO" id="GO:0008380">
    <property type="term" value="P:RNA splicing"/>
    <property type="evidence" value="ECO:0000318"/>
    <property type="project" value="GO_Central"/>
</dbReference>
<dbReference type="InterPro" id="IPR007590">
    <property type="entry name" value="Saf4/Yju2"/>
</dbReference>
<dbReference type="PANTHER" id="PTHR12111">
    <property type="entry name" value="SPLICING FACTOR YJU2"/>
    <property type="match status" value="1"/>
</dbReference>
<dbReference type="PANTHER" id="PTHR12111:SF2">
    <property type="entry name" value="SPLICING FACTOR YJU2B-RELATED"/>
    <property type="match status" value="1"/>
</dbReference>
<dbReference type="Pfam" id="PF04502">
    <property type="entry name" value="Saf4_Yju2"/>
    <property type="match status" value="1"/>
</dbReference>
<keyword id="KW-0175">Coiled coil</keyword>
<keyword id="KW-0539">Nucleus</keyword>
<keyword id="KW-0597">Phosphoprotein</keyword>
<keyword id="KW-1267">Proteomics identification</keyword>
<keyword id="KW-1185">Reference proteome</keyword>
<comment type="function">
    <text evidence="1">May be involved in mRNA splicing.</text>
</comment>
<comment type="interaction">
    <interactant intactId="EBI-716093">
        <id>P13994</id>
    </interactant>
    <interactant intactId="EBI-2559831">
        <id>Q92989</id>
        <label>CLP1</label>
    </interactant>
    <organismsDiffer>false</organismsDiffer>
    <experiments>3</experiments>
</comment>
<comment type="interaction">
    <interactant intactId="EBI-716093">
        <id>P13994</id>
    </interactant>
    <interactant intactId="EBI-743105">
        <id>Q5JVL4</id>
        <label>EFHC1</label>
    </interactant>
    <organismsDiffer>false</organismsDiffer>
    <experiments>3</experiments>
</comment>
<comment type="interaction">
    <interactant intactId="EBI-716093">
        <id>P13994</id>
    </interactant>
    <interactant intactId="EBI-7116203">
        <id>O75031</id>
        <label>HSF2BP</label>
    </interactant>
    <organismsDiffer>false</organismsDiffer>
    <experiments>3</experiments>
</comment>
<comment type="interaction">
    <interactant intactId="EBI-716093">
        <id>P13994</id>
    </interactant>
    <interactant intactId="EBI-358489">
        <id>Q96GM5</id>
        <label>SMARCD1</label>
    </interactant>
    <organismsDiffer>false</organismsDiffer>
    <experiments>3</experiments>
</comment>
<comment type="interaction">
    <interactant intactId="EBI-716093">
        <id>P13994</id>
    </interactant>
    <interactant intactId="EBI-3918381">
        <id>Q96PN8</id>
        <label>TSSK3</label>
    </interactant>
    <organismsDiffer>false</organismsDiffer>
    <experiments>3</experiments>
</comment>
<comment type="interaction">
    <interactant intactId="EBI-716093">
        <id>P13994</id>
    </interactant>
    <interactant intactId="EBI-12302147">
        <id>Q96NJ6</id>
        <label>ZFP3</label>
    </interactant>
    <organismsDiffer>false</organismsDiffer>
    <experiments>5</experiments>
</comment>
<comment type="interaction">
    <interactant intactId="EBI-716093">
        <id>P13994</id>
    </interactant>
    <interactant intactId="EBI-741694">
        <id>P49910</id>
        <label>ZNF165</label>
    </interactant>
    <organismsDiffer>false</organismsDiffer>
    <experiments>6</experiments>
</comment>
<comment type="interaction">
    <interactant intactId="EBI-716093">
        <id>P13994</id>
    </interactant>
    <interactant intactId="EBI-1105334">
        <id>P17021</id>
        <label>ZNF17</label>
    </interactant>
    <organismsDiffer>false</organismsDiffer>
    <experiments>3</experiments>
</comment>
<comment type="interaction">
    <interactant intactId="EBI-716093">
        <id>P13994</id>
    </interactant>
    <interactant intactId="EBI-707773">
        <id>P17028</id>
        <label>ZNF24</label>
    </interactant>
    <organismsDiffer>false</organismsDiffer>
    <experiments>7</experiments>
</comment>
<comment type="interaction">
    <interactant intactId="EBI-716093">
        <id>P13994</id>
    </interactant>
    <interactant intactId="EBI-10177272">
        <id>P15622-3</id>
        <label>ZNF250</label>
    </interactant>
    <organismsDiffer>false</organismsDiffer>
    <experiments>3</experiments>
</comment>
<comment type="interaction">
    <interactant intactId="EBI-716093">
        <id>P13994</id>
    </interactant>
    <interactant intactId="EBI-1640965">
        <id>P17036</id>
        <label>ZNF3</label>
    </interactant>
    <organismsDiffer>false</organismsDiffer>
    <experiments>5</experiments>
</comment>
<comment type="interaction">
    <interactant intactId="EBI-716093">
        <id>P13994</id>
    </interactant>
    <interactant intactId="EBI-7233259">
        <id>Q86UD4</id>
        <label>ZNF329</label>
    </interactant>
    <organismsDiffer>false</organismsDiffer>
    <experiments>5</experiments>
</comment>
<comment type="interaction">
    <interactant intactId="EBI-716093">
        <id>P13994</id>
    </interactant>
    <interactant intactId="EBI-11041653">
        <id>P13682</id>
        <label>ZNF35</label>
    </interactant>
    <organismsDiffer>false</organismsDiffer>
    <experiments>3</experiments>
</comment>
<comment type="interaction">
    <interactant intactId="EBI-716093">
        <id>P13994</id>
    </interactant>
    <interactant intactId="EBI-10172590">
        <id>Q7Z3I7</id>
        <label>ZNF572</label>
    </interactant>
    <organismsDiffer>false</organismsDiffer>
    <experiments>9</experiments>
</comment>
<comment type="interaction">
    <interactant intactId="EBI-716093">
        <id>P13994</id>
    </interactant>
    <interactant intactId="EBI-9977294">
        <id>Q9UEG4</id>
        <label>ZNF629</label>
    </interactant>
    <organismsDiffer>false</organismsDiffer>
    <experiments>3</experiments>
</comment>
<comment type="interaction">
    <interactant intactId="EBI-716093">
        <id>P13994</id>
    </interactant>
    <interactant intactId="EBI-10251462">
        <id>Q6NX45</id>
        <label>ZNF774</label>
    </interactant>
    <organismsDiffer>false</organismsDiffer>
    <experiments>3</experiments>
</comment>
<comment type="interaction">
    <interactant intactId="EBI-716093">
        <id>P13994</id>
    </interactant>
    <interactant intactId="EBI-10237274">
        <id>Q15937</id>
        <label>ZNF79</label>
    </interactant>
    <organismsDiffer>false</organismsDiffer>
    <experiments>3</experiments>
</comment>
<comment type="interaction">
    <interactant intactId="EBI-716093">
        <id>P13994</id>
    </interactant>
    <interactant intactId="EBI-5667516">
        <id>Q9Y2P0</id>
        <label>ZNF835</label>
    </interactant>
    <organismsDiffer>false</organismsDiffer>
    <experiments>3</experiments>
</comment>
<comment type="interaction">
    <interactant intactId="EBI-716093">
        <id>P13994</id>
    </interactant>
    <interactant intactId="EBI-5667532">
        <id>Q3MJ62</id>
        <label>ZSCAN23</label>
    </interactant>
    <organismsDiffer>false</organismsDiffer>
    <experiments>5</experiments>
</comment>
<comment type="subcellular location">
    <subcellularLocation>
        <location evidence="1">Nucleus</location>
    </subcellularLocation>
</comment>
<comment type="induction">
    <text evidence="4">By poly(RI), poly(RC) and Newcastle disease virus.</text>
</comment>
<comment type="similarity">
    <text evidence="5">Belongs to the CWC16 family.</text>
</comment>
<comment type="sequence caution" evidence="5">
    <conflict type="erroneous gene model prediction">
        <sequence resource="EMBL-CDS" id="CAA32138"/>
    </conflict>
</comment>
<comment type="sequence caution" evidence="5">
    <conflict type="frameshift">
        <sequence resource="EMBL-CDS" id="CAA32138"/>
    </conflict>
</comment>